<accession>Q8K1T6</accession>
<accession>Q9D7E5</accession>
<dbReference type="EMBL" id="AJ315550">
    <property type="protein sequence ID" value="CAC85546.1"/>
    <property type="molecule type" value="mRNA"/>
</dbReference>
<dbReference type="EMBL" id="KU253700">
    <property type="protein sequence ID" value="APT43293.1"/>
    <property type="molecule type" value="mRNA"/>
</dbReference>
<dbReference type="EMBL" id="AK009303">
    <property type="protein sequence ID" value="BAB26204.1"/>
    <property type="molecule type" value="mRNA"/>
</dbReference>
<dbReference type="EMBL" id="AC087117">
    <property type="status" value="NOT_ANNOTATED_CDS"/>
    <property type="molecule type" value="Genomic_DNA"/>
</dbReference>
<dbReference type="EMBL" id="CH466666">
    <property type="protein sequence ID" value="EDL26668.1"/>
    <property type="molecule type" value="Genomic_DNA"/>
</dbReference>
<dbReference type="EMBL" id="AJ315551">
    <property type="protein sequence ID" value="CAC85547.1"/>
    <property type="molecule type" value="mRNA"/>
</dbReference>
<dbReference type="EMBL" id="BC132420">
    <property type="protein sequence ID" value="AAI32421.1"/>
    <property type="molecule type" value="mRNA"/>
</dbReference>
<dbReference type="EMBL" id="BC138777">
    <property type="protein sequence ID" value="AAI38778.1"/>
    <property type="molecule type" value="mRNA"/>
</dbReference>
<dbReference type="CCDS" id="CCDS28679.1">
    <molecule id="Q8K1T6-2"/>
</dbReference>
<dbReference type="RefSeq" id="NP_001392084.1">
    <molecule id="Q8K1T6-2"/>
    <property type="nucleotide sequence ID" value="NM_001405155.1"/>
</dbReference>
<dbReference type="RefSeq" id="NP_001392085.1">
    <molecule id="Q8K1T6-2"/>
    <property type="nucleotide sequence ID" value="NM_001405156.1"/>
</dbReference>
<dbReference type="RefSeq" id="NP_081642.1">
    <molecule id="Q8K1T6-2"/>
    <property type="nucleotide sequence ID" value="NM_027366.2"/>
</dbReference>
<dbReference type="RefSeq" id="XP_006524949.1">
    <molecule id="Q8K1T6-1"/>
    <property type="nucleotide sequence ID" value="XM_006524886.4"/>
</dbReference>
<dbReference type="RefSeq" id="XP_006524950.1">
    <molecule id="Q8K1T6-1"/>
    <property type="nucleotide sequence ID" value="XM_006524887.5"/>
</dbReference>
<dbReference type="RefSeq" id="XP_030105903.1">
    <molecule id="Q8K1T6-1"/>
    <property type="nucleotide sequence ID" value="XM_030250043.1"/>
</dbReference>
<dbReference type="FunCoup" id="Q8K1T6">
    <property type="interactions" value="431"/>
</dbReference>
<dbReference type="IntAct" id="Q8K1T6">
    <property type="interactions" value="1"/>
</dbReference>
<dbReference type="STRING" id="10090.ENSMUSP00000013910"/>
<dbReference type="ProteomicsDB" id="292058">
    <molecule id="Q8K1T6-1"/>
</dbReference>
<dbReference type="ProteomicsDB" id="292059">
    <molecule id="Q8K1T6-2"/>
</dbReference>
<dbReference type="Ensembl" id="ENSMUST00000013910.5">
    <molecule id="Q8K1T6-2"/>
    <property type="protein sequence ID" value="ENSMUSP00000013910.5"/>
    <property type="gene ID" value="ENSMUSG00000013766.12"/>
</dbReference>
<dbReference type="Ensembl" id="ENSMUST00000172678.8">
    <molecule id="Q8K1T6-2"/>
    <property type="protein sequence ID" value="ENSMUSP00000134073.2"/>
    <property type="gene ID" value="ENSMUSG00000013766.12"/>
</dbReference>
<dbReference type="Ensembl" id="ENSMUST00000172959.2">
    <molecule id="Q8K1T6-1"/>
    <property type="protein sequence ID" value="ENSMUSP00000133753.2"/>
    <property type="gene ID" value="ENSMUSG00000013766.12"/>
</dbReference>
<dbReference type="GeneID" id="70274"/>
<dbReference type="KEGG" id="mmu:70274"/>
<dbReference type="UCSC" id="uc008cfo.1">
    <molecule id="Q8K1T6-1"/>
    <property type="organism name" value="mouse"/>
</dbReference>
<dbReference type="UCSC" id="uc008cfp.1">
    <property type="organism name" value="mouse"/>
</dbReference>
<dbReference type="AGR" id="MGI:1917524"/>
<dbReference type="CTD" id="79136"/>
<dbReference type="MGI" id="MGI:1917524">
    <property type="gene designation" value="Ly6g6e"/>
</dbReference>
<dbReference type="VEuPathDB" id="HostDB:ENSMUSG00000013766"/>
<dbReference type="GeneTree" id="ENSGT00390000007175"/>
<dbReference type="HOGENOM" id="CLU_136280_0_0_1"/>
<dbReference type="InParanoid" id="Q8K1T6"/>
<dbReference type="OMA" id="NIPCHTS"/>
<dbReference type="OrthoDB" id="9031844at2759"/>
<dbReference type="PhylomeDB" id="Q8K1T6"/>
<dbReference type="TreeFam" id="TF338408"/>
<dbReference type="BioGRID-ORCS" id="70274">
    <property type="hits" value="2 hits in 76 CRISPR screens"/>
</dbReference>
<dbReference type="PRO" id="PR:Q8K1T6"/>
<dbReference type="Proteomes" id="UP000000589">
    <property type="component" value="Chromosome 17"/>
</dbReference>
<dbReference type="RNAct" id="Q8K1T6">
    <property type="molecule type" value="protein"/>
</dbReference>
<dbReference type="Bgee" id="ENSMUSG00000013766">
    <property type="expression patterns" value="Expressed in esophagus and 78 other cell types or tissues"/>
</dbReference>
<dbReference type="ExpressionAtlas" id="Q8K1T6">
    <property type="expression patterns" value="baseline and differential"/>
</dbReference>
<dbReference type="GO" id="GO:0042995">
    <property type="term" value="C:cell projection"/>
    <property type="evidence" value="ECO:0007669"/>
    <property type="project" value="UniProtKB-SubCell"/>
</dbReference>
<dbReference type="GO" id="GO:0009986">
    <property type="term" value="C:cell surface"/>
    <property type="evidence" value="ECO:0007669"/>
    <property type="project" value="UniProtKB-SubCell"/>
</dbReference>
<dbReference type="GO" id="GO:0005886">
    <property type="term" value="C:plasma membrane"/>
    <property type="evidence" value="ECO:0000314"/>
    <property type="project" value="MGI"/>
</dbReference>
<dbReference type="GO" id="GO:0045202">
    <property type="term" value="C:synapse"/>
    <property type="evidence" value="ECO:0007669"/>
    <property type="project" value="GOC"/>
</dbReference>
<dbReference type="GO" id="GO:0030549">
    <property type="term" value="F:acetylcholine receptor activator activity"/>
    <property type="evidence" value="ECO:0000314"/>
    <property type="project" value="MGI"/>
</dbReference>
<dbReference type="GO" id="GO:0033130">
    <property type="term" value="F:acetylcholine receptor binding"/>
    <property type="evidence" value="ECO:0000314"/>
    <property type="project" value="MGI"/>
</dbReference>
<dbReference type="GO" id="GO:0004675">
    <property type="term" value="F:transmembrane receptor protein serine/threonine kinase activity"/>
    <property type="evidence" value="ECO:0007669"/>
    <property type="project" value="InterPro"/>
</dbReference>
<dbReference type="GO" id="GO:0095500">
    <property type="term" value="P:acetylcholine receptor signaling pathway"/>
    <property type="evidence" value="ECO:0000314"/>
    <property type="project" value="MGI"/>
</dbReference>
<dbReference type="GO" id="GO:0002029">
    <property type="term" value="P:desensitization of G protein-coupled receptor signaling pathway"/>
    <property type="evidence" value="ECO:0000314"/>
    <property type="project" value="MGI"/>
</dbReference>
<dbReference type="CDD" id="cd23548">
    <property type="entry name" value="TFP_LU_ECD_Ly6G6e"/>
    <property type="match status" value="1"/>
</dbReference>
<dbReference type="Gene3D" id="2.10.60.10">
    <property type="entry name" value="CD59"/>
    <property type="match status" value="1"/>
</dbReference>
<dbReference type="InterPro" id="IPR000472">
    <property type="entry name" value="Activin_recp"/>
</dbReference>
<dbReference type="InterPro" id="IPR039700">
    <property type="entry name" value="Ly6g6e"/>
</dbReference>
<dbReference type="InterPro" id="IPR045860">
    <property type="entry name" value="Snake_toxin-like_sf"/>
</dbReference>
<dbReference type="PANTHER" id="PTHR14569">
    <property type="entry name" value="LYMPHOCYTE ANTIGEN 6 FAMILY MEMBER G6E"/>
    <property type="match status" value="1"/>
</dbReference>
<dbReference type="PANTHER" id="PTHR14569:SF0">
    <property type="entry name" value="LYMPHOCYTE ANTIGEN 6 FAMILY MEMBER G6E"/>
    <property type="match status" value="1"/>
</dbReference>
<dbReference type="Pfam" id="PF01064">
    <property type="entry name" value="Activin_recp"/>
    <property type="match status" value="1"/>
</dbReference>
<dbReference type="SUPFAM" id="SSF57302">
    <property type="entry name" value="Snake toxin-like"/>
    <property type="match status" value="1"/>
</dbReference>
<comment type="function">
    <text evidence="4">Believed to act as a modulator of nicotinic acetylcholine receptors (nAChRs) activity. In vitro potentiates alpha-3:beta-4-containing nAChRs maximum response by increasing peak current and slowing down receptor desensitization; the activity is dependent on its cell surface localization.</text>
</comment>
<comment type="subunit">
    <text evidence="4">Interacts with CHRNA4.</text>
</comment>
<comment type="subcellular location">
    <subcellularLocation>
        <location evidence="6">Cell surface</location>
    </subcellularLocation>
    <subcellularLocation>
        <location evidence="3 6">Cell membrane</location>
    </subcellularLocation>
    <subcellularLocation>
        <location evidence="3">Cell projection</location>
    </subcellularLocation>
</comment>
<comment type="alternative products">
    <event type="alternative splicing"/>
    <isoform>
        <id>Q8K1T6-1</id>
        <name>1</name>
        <sequence type="displayed"/>
    </isoform>
    <isoform>
        <id>Q8K1T6-2</id>
        <name>2</name>
        <sequence type="described" ref="VSP_059015"/>
    </isoform>
</comment>
<comment type="PTM">
    <text evidence="3">O-glycosylated. Contains sialic acid residues.</text>
</comment>
<comment type="miscellaneous">
    <text evidence="5">LY6G6E is a pseudogene in humans.</text>
</comment>
<proteinExistence type="evidence at protein level"/>
<evidence type="ECO:0000250" key="1">
    <source>
        <dbReference type="UniProtKB" id="P0DP57"/>
    </source>
</evidence>
<evidence type="ECO:0000255" key="2"/>
<evidence type="ECO:0000269" key="3">
    <source>
    </source>
</evidence>
<evidence type="ECO:0000269" key="4">
    <source>
    </source>
</evidence>
<evidence type="ECO:0000305" key="5"/>
<evidence type="ECO:0000305" key="6">
    <source>
    </source>
</evidence>
<feature type="signal peptide" evidence="2">
    <location>
        <begin position="1"/>
        <end position="18"/>
    </location>
</feature>
<feature type="chain" id="PRO_5010146328" description="Lymphocyte antigen 6G6e" evidence="2">
    <location>
        <begin position="19"/>
        <end position="166"/>
    </location>
</feature>
<feature type="domain" description="UPAR/Ly6">
    <location>
        <begin position="28"/>
        <end position="151"/>
    </location>
</feature>
<feature type="disulfide bond" evidence="1">
    <location>
        <begin position="30"/>
        <end position="52"/>
    </location>
</feature>
<feature type="disulfide bond" evidence="1">
    <location>
        <begin position="33"/>
        <end position="39"/>
    </location>
</feature>
<feature type="disulfide bond" evidence="1">
    <location>
        <begin position="110"/>
        <end position="129"/>
    </location>
</feature>
<feature type="disulfide bond" evidence="1">
    <location>
        <begin position="130"/>
        <end position="135"/>
    </location>
</feature>
<feature type="splice variant" id="VSP_059015" description="In isoform 2.">
    <location>
        <begin position="60"/>
        <end position="91"/>
    </location>
</feature>
<protein>
    <recommendedName>
        <fullName>Lymphocyte antigen 6G6e</fullName>
    </recommendedName>
    <alternativeName>
        <fullName>Lymphocyte antigen 6 complex locus protein G6e</fullName>
    </alternativeName>
</protein>
<gene>
    <name type="primary">Ly6g6e</name>
</gene>
<name>LY66E_MOUSE</name>
<sequence>MGPSSAFLGVLFLSGTLGLTTSPARGRLRCYTCSFAKPCDPVPRECREDEVCGVSVGTSGRTLVRWPFSRWLLSFLPMAAAATSAFLFCPTEQKEEEVIERKGCLPRAQCPLLGHATYWSRSYSLRHQCCEQDLCNAAASQPPPNLPLMTLLPLAAMIGWGVHDFL</sequence>
<keyword id="KW-0025">Alternative splicing</keyword>
<keyword id="KW-1003">Cell membrane</keyword>
<keyword id="KW-0966">Cell projection</keyword>
<keyword id="KW-1015">Disulfide bond</keyword>
<keyword id="KW-0472">Membrane</keyword>
<keyword id="KW-1185">Reference proteome</keyword>
<keyword id="KW-0732">Signal</keyword>
<organism>
    <name type="scientific">Mus musculus</name>
    <name type="common">Mouse</name>
    <dbReference type="NCBI Taxonomy" id="10090"/>
    <lineage>
        <taxon>Eukaryota</taxon>
        <taxon>Metazoa</taxon>
        <taxon>Chordata</taxon>
        <taxon>Craniata</taxon>
        <taxon>Vertebrata</taxon>
        <taxon>Euteleostomi</taxon>
        <taxon>Mammalia</taxon>
        <taxon>Eutheria</taxon>
        <taxon>Euarchontoglires</taxon>
        <taxon>Glires</taxon>
        <taxon>Rodentia</taxon>
        <taxon>Myomorpha</taxon>
        <taxon>Muroidea</taxon>
        <taxon>Muridae</taxon>
        <taxon>Murinae</taxon>
        <taxon>Mus</taxon>
        <taxon>Mus</taxon>
    </lineage>
</organism>
<reference key="1">
    <citation type="journal article" date="2002" name="Genomics">
        <title>Transcriptional analysis of a novel cluster of LY-6 family members in the human and mouse major histocompatibility complex: five genes with many splice forms.</title>
        <authorList>
            <person name="Mallya M."/>
            <person name="Campbell R.D."/>
            <person name="Aguado B."/>
        </authorList>
    </citation>
    <scope>NUCLEOTIDE SEQUENCE [MRNA] (ISOFORM 1)</scope>
    <source>
        <strain>129</strain>
    </source>
</reference>
<reference key="2">
    <citation type="submission" date="2015-12" db="EMBL/GenBank/DDBJ databases">
        <title>Alternative splicing and transcription induced chimerism in G6F and Ly6G6D among mammals.</title>
        <authorList>
            <person name="Lopez-Diez R."/>
            <person name="Rastrojo A."/>
            <person name="Hernandez-Torres F."/>
            <person name="Aguado B."/>
        </authorList>
    </citation>
    <scope>NUCLEOTIDE SEQUENCE [MRNA] (ISOFORM 2)</scope>
</reference>
<reference key="3">
    <citation type="journal article" date="2005" name="Science">
        <title>The transcriptional landscape of the mammalian genome.</title>
        <authorList>
            <person name="Carninci P."/>
            <person name="Kasukawa T."/>
            <person name="Katayama S."/>
            <person name="Gough J."/>
            <person name="Frith M.C."/>
            <person name="Maeda N."/>
            <person name="Oyama R."/>
            <person name="Ravasi T."/>
            <person name="Lenhard B."/>
            <person name="Wells C."/>
            <person name="Kodzius R."/>
            <person name="Shimokawa K."/>
            <person name="Bajic V.B."/>
            <person name="Brenner S.E."/>
            <person name="Batalov S."/>
            <person name="Forrest A.R."/>
            <person name="Zavolan M."/>
            <person name="Davis M.J."/>
            <person name="Wilming L.G."/>
            <person name="Aidinis V."/>
            <person name="Allen J.E."/>
            <person name="Ambesi-Impiombato A."/>
            <person name="Apweiler R."/>
            <person name="Aturaliya R.N."/>
            <person name="Bailey T.L."/>
            <person name="Bansal M."/>
            <person name="Baxter L."/>
            <person name="Beisel K.W."/>
            <person name="Bersano T."/>
            <person name="Bono H."/>
            <person name="Chalk A.M."/>
            <person name="Chiu K.P."/>
            <person name="Choudhary V."/>
            <person name="Christoffels A."/>
            <person name="Clutterbuck D.R."/>
            <person name="Crowe M.L."/>
            <person name="Dalla E."/>
            <person name="Dalrymple B.P."/>
            <person name="de Bono B."/>
            <person name="Della Gatta G."/>
            <person name="di Bernardo D."/>
            <person name="Down T."/>
            <person name="Engstrom P."/>
            <person name="Fagiolini M."/>
            <person name="Faulkner G."/>
            <person name="Fletcher C.F."/>
            <person name="Fukushima T."/>
            <person name="Furuno M."/>
            <person name="Futaki S."/>
            <person name="Gariboldi M."/>
            <person name="Georgii-Hemming P."/>
            <person name="Gingeras T.R."/>
            <person name="Gojobori T."/>
            <person name="Green R.E."/>
            <person name="Gustincich S."/>
            <person name="Harbers M."/>
            <person name="Hayashi Y."/>
            <person name="Hensch T.K."/>
            <person name="Hirokawa N."/>
            <person name="Hill D."/>
            <person name="Huminiecki L."/>
            <person name="Iacono M."/>
            <person name="Ikeo K."/>
            <person name="Iwama A."/>
            <person name="Ishikawa T."/>
            <person name="Jakt M."/>
            <person name="Kanapin A."/>
            <person name="Katoh M."/>
            <person name="Kawasawa Y."/>
            <person name="Kelso J."/>
            <person name="Kitamura H."/>
            <person name="Kitano H."/>
            <person name="Kollias G."/>
            <person name="Krishnan S.P."/>
            <person name="Kruger A."/>
            <person name="Kummerfeld S.K."/>
            <person name="Kurochkin I.V."/>
            <person name="Lareau L.F."/>
            <person name="Lazarevic D."/>
            <person name="Lipovich L."/>
            <person name="Liu J."/>
            <person name="Liuni S."/>
            <person name="McWilliam S."/>
            <person name="Madan Babu M."/>
            <person name="Madera M."/>
            <person name="Marchionni L."/>
            <person name="Matsuda H."/>
            <person name="Matsuzawa S."/>
            <person name="Miki H."/>
            <person name="Mignone F."/>
            <person name="Miyake S."/>
            <person name="Morris K."/>
            <person name="Mottagui-Tabar S."/>
            <person name="Mulder N."/>
            <person name="Nakano N."/>
            <person name="Nakauchi H."/>
            <person name="Ng P."/>
            <person name="Nilsson R."/>
            <person name="Nishiguchi S."/>
            <person name="Nishikawa S."/>
            <person name="Nori F."/>
            <person name="Ohara O."/>
            <person name="Okazaki Y."/>
            <person name="Orlando V."/>
            <person name="Pang K.C."/>
            <person name="Pavan W.J."/>
            <person name="Pavesi G."/>
            <person name="Pesole G."/>
            <person name="Petrovsky N."/>
            <person name="Piazza S."/>
            <person name="Reed J."/>
            <person name="Reid J.F."/>
            <person name="Ring B.Z."/>
            <person name="Ringwald M."/>
            <person name="Rost B."/>
            <person name="Ruan Y."/>
            <person name="Salzberg S.L."/>
            <person name="Sandelin A."/>
            <person name="Schneider C."/>
            <person name="Schoenbach C."/>
            <person name="Sekiguchi K."/>
            <person name="Semple C.A."/>
            <person name="Seno S."/>
            <person name="Sessa L."/>
            <person name="Sheng Y."/>
            <person name="Shibata Y."/>
            <person name="Shimada H."/>
            <person name="Shimada K."/>
            <person name="Silva D."/>
            <person name="Sinclair B."/>
            <person name="Sperling S."/>
            <person name="Stupka E."/>
            <person name="Sugiura K."/>
            <person name="Sultana R."/>
            <person name="Takenaka Y."/>
            <person name="Taki K."/>
            <person name="Tammoja K."/>
            <person name="Tan S.L."/>
            <person name="Tang S."/>
            <person name="Taylor M.S."/>
            <person name="Tegner J."/>
            <person name="Teichmann S.A."/>
            <person name="Ueda H.R."/>
            <person name="van Nimwegen E."/>
            <person name="Verardo R."/>
            <person name="Wei C.L."/>
            <person name="Yagi K."/>
            <person name="Yamanishi H."/>
            <person name="Zabarovsky E."/>
            <person name="Zhu S."/>
            <person name="Zimmer A."/>
            <person name="Hide W."/>
            <person name="Bult C."/>
            <person name="Grimmond S.M."/>
            <person name="Teasdale R.D."/>
            <person name="Liu E.T."/>
            <person name="Brusic V."/>
            <person name="Quackenbush J."/>
            <person name="Wahlestedt C."/>
            <person name="Mattick J.S."/>
            <person name="Hume D.A."/>
            <person name="Kai C."/>
            <person name="Sasaki D."/>
            <person name="Tomaru Y."/>
            <person name="Fukuda S."/>
            <person name="Kanamori-Katayama M."/>
            <person name="Suzuki M."/>
            <person name="Aoki J."/>
            <person name="Arakawa T."/>
            <person name="Iida J."/>
            <person name="Imamura K."/>
            <person name="Itoh M."/>
            <person name="Kato T."/>
            <person name="Kawaji H."/>
            <person name="Kawagashira N."/>
            <person name="Kawashima T."/>
            <person name="Kojima M."/>
            <person name="Kondo S."/>
            <person name="Konno H."/>
            <person name="Nakano K."/>
            <person name="Ninomiya N."/>
            <person name="Nishio T."/>
            <person name="Okada M."/>
            <person name="Plessy C."/>
            <person name="Shibata K."/>
            <person name="Shiraki T."/>
            <person name="Suzuki S."/>
            <person name="Tagami M."/>
            <person name="Waki K."/>
            <person name="Watahiki A."/>
            <person name="Okamura-Oho Y."/>
            <person name="Suzuki H."/>
            <person name="Kawai J."/>
            <person name="Hayashizaki Y."/>
        </authorList>
    </citation>
    <scope>NUCLEOTIDE SEQUENCE [LARGE SCALE MRNA] (ISOFORM 2)</scope>
    <source>
        <strain>C57BL/6J</strain>
        <tissue>Tongue</tissue>
    </source>
</reference>
<reference key="4">
    <citation type="journal article" date="2009" name="PLoS Biol.">
        <title>Lineage-specific biology revealed by a finished genome assembly of the mouse.</title>
        <authorList>
            <person name="Church D.M."/>
            <person name="Goodstadt L."/>
            <person name="Hillier L.W."/>
            <person name="Zody M.C."/>
            <person name="Goldstein S."/>
            <person name="She X."/>
            <person name="Bult C.J."/>
            <person name="Agarwala R."/>
            <person name="Cherry J.L."/>
            <person name="DiCuccio M."/>
            <person name="Hlavina W."/>
            <person name="Kapustin Y."/>
            <person name="Meric P."/>
            <person name="Maglott D."/>
            <person name="Birtle Z."/>
            <person name="Marques A.C."/>
            <person name="Graves T."/>
            <person name="Zhou S."/>
            <person name="Teague B."/>
            <person name="Potamousis K."/>
            <person name="Churas C."/>
            <person name="Place M."/>
            <person name="Herschleb J."/>
            <person name="Runnheim R."/>
            <person name="Forrest D."/>
            <person name="Amos-Landgraf J."/>
            <person name="Schwartz D.C."/>
            <person name="Cheng Z."/>
            <person name="Lindblad-Toh K."/>
            <person name="Eichler E.E."/>
            <person name="Ponting C.P."/>
        </authorList>
    </citation>
    <scope>NUCLEOTIDE SEQUENCE [LARGE SCALE GENOMIC DNA]</scope>
    <source>
        <strain>C57BL/6J</strain>
    </source>
</reference>
<reference key="5">
    <citation type="submission" date="2005-09" db="EMBL/GenBank/DDBJ databases">
        <authorList>
            <person name="Mural R.J."/>
            <person name="Adams M.D."/>
            <person name="Myers E.W."/>
            <person name="Smith H.O."/>
            <person name="Venter J.C."/>
        </authorList>
    </citation>
    <scope>NUCLEOTIDE SEQUENCE [LARGE SCALE GENOMIC DNA]</scope>
</reference>
<reference key="6">
    <citation type="journal article" date="2004" name="Genome Res.">
        <title>The status, quality, and expansion of the NIH full-length cDNA project: the Mammalian Gene Collection (MGC).</title>
        <authorList>
            <consortium name="The MGC Project Team"/>
        </authorList>
    </citation>
    <scope>NUCLEOTIDE SEQUENCE [LARGE SCALE MRNA] (ISOFORM 2)</scope>
    <source>
        <tissue>Lung</tissue>
    </source>
</reference>
<reference key="7">
    <citation type="journal article" date="2006" name="Protein Sci.">
        <title>Characterization of the five novel Ly-6 superfamily members encoded in the MHC, and detection of cells expressing their potential ligands.</title>
        <authorList>
            <person name="Mallya M."/>
            <person name="Campbell R.D."/>
            <person name="Aguado B."/>
        </authorList>
    </citation>
    <scope>SUBCELLULAR LOCATION</scope>
    <scope>GLYCOSYLATION</scope>
</reference>
<reference key="8">
    <citation type="journal article" date="2015" name="J. Biol. Chem.">
        <title>Mechanisms of inhibition and potentiation of alpha4beta2 nicotinic acetylcholine receptors by members of the Ly6 protein family.</title>
        <authorList>
            <person name="Wu M."/>
            <person name="Puddifoot C.A."/>
            <person name="Taylor P."/>
            <person name="Joiner W.J."/>
        </authorList>
    </citation>
    <scope>FUNCTION</scope>
    <scope>INTERACTION WITH CHRNA4</scope>
    <scope>SUBCELLULAR LOCATION</scope>
</reference>